<sequence>MLVNKVIGLLGVLFATRFTNAVELDLDNYESLQNATSLIAYGLMDYYTGNQYGKTVGMFSDPYYWWEAGGAWGCMLDYWFFMDNDTYNDEIIAAMIHQAGDDNDYIPLNQSTTEGNDDQAFWGIAAMTAAERNFTNPPENEPQWLYLAQAVFNTMALRWDADSCGGGLRWQIFVWNSGYDYKNTVSNGALFHIAARLARYTGNQTYVDWAEKVYEWMVGVNLISNGTYKYVYDGVSIDDNCTKVTSYQWTYNQGLLLAGSAYLYNFTGSDLWHTRTKEFLNASQVFFHDGIVYEAACQGPNSCNTDQRSFKAYFARFLGVTAQLVPETRNQIMSWLNTSAIAAAKSCSGGTDGHTCGLNWFNGTWDGMYGLGEQMSALEVMVNTRALDKPAPYTAENGGSSVGDGAAGTQAQPTNLAPLNITKGSKAGAGIITAVIGISIVACALWLVF</sequence>
<name>DCW1_YEAST</name>
<feature type="signal peptide" evidence="1">
    <location>
        <begin position="1"/>
        <end position="21"/>
    </location>
</feature>
<feature type="chain" id="PRO_0000012125" description="Mannan endo-1,6-alpha-mannosidase DCW1">
    <location>
        <begin position="22"/>
        <end position="428"/>
    </location>
</feature>
<feature type="propeptide" id="PRO_0000012126" description="Removed in mature form" evidence="1">
    <location>
        <begin position="429"/>
        <end position="449"/>
    </location>
</feature>
<feature type="lipid moiety-binding region" description="GPI-anchor amidated glycine" evidence="1">
    <location>
        <position position="428"/>
    </location>
</feature>
<feature type="glycosylation site" description="N-linked (GlcNAc...) asparagine" evidence="1">
    <location>
        <position position="34"/>
    </location>
</feature>
<feature type="glycosylation site" description="N-linked (GlcNAc...) asparagine" evidence="1">
    <location>
        <position position="84"/>
    </location>
</feature>
<feature type="glycosylation site" description="N-linked (GlcNAc...) asparagine" evidence="1">
    <location>
        <position position="109"/>
    </location>
</feature>
<feature type="glycosylation site" description="N-linked (GlcNAc...) asparagine" evidence="1">
    <location>
        <position position="133"/>
    </location>
</feature>
<feature type="glycosylation site" description="N-linked (GlcNAc...) asparagine" evidence="1">
    <location>
        <position position="203"/>
    </location>
</feature>
<feature type="glycosylation site" description="N-linked (GlcNAc...) asparagine" evidence="1">
    <location>
        <position position="225"/>
    </location>
</feature>
<feature type="glycosylation site" description="N-linked (GlcNAc...) asparagine" evidence="1">
    <location>
        <position position="240"/>
    </location>
</feature>
<feature type="glycosylation site" description="N-linked (GlcNAc...) asparagine" evidence="1">
    <location>
        <position position="265"/>
    </location>
</feature>
<feature type="glycosylation site" description="N-linked (GlcNAc...) asparagine" evidence="1">
    <location>
        <position position="281"/>
    </location>
</feature>
<feature type="glycosylation site" description="N-linked (GlcNAc...) asparagine" evidence="1">
    <location>
        <position position="337"/>
    </location>
</feature>
<feature type="glycosylation site" description="N-linked (GlcNAc...) asparagine" evidence="1">
    <location>
        <position position="362"/>
    </location>
</feature>
<feature type="glycosylation site" description="N-linked (GlcNAc...) asparagine" evidence="1">
    <location>
        <position position="420"/>
    </location>
</feature>
<feature type="sequence conflict" description="In Ref. 4; AAU09756." evidence="4" ref="4">
    <original>T</original>
    <variation>A</variation>
    <location>
        <position position="276"/>
    </location>
</feature>
<gene>
    <name type="primary">DCW1</name>
    <name type="ordered locus">YKL046C</name>
    <name type="ORF">YKL259</name>
</gene>
<dbReference type="EC" id="3.2.1.101"/>
<dbReference type="EMBL" id="X71621">
    <property type="status" value="NOT_ANNOTATED_CDS"/>
    <property type="molecule type" value="Genomic_DNA"/>
</dbReference>
<dbReference type="EMBL" id="Z28046">
    <property type="protein sequence ID" value="CAA81881.1"/>
    <property type="molecule type" value="Genomic_DNA"/>
</dbReference>
<dbReference type="EMBL" id="AY723839">
    <property type="protein sequence ID" value="AAU09756.1"/>
    <property type="molecule type" value="Genomic_DNA"/>
</dbReference>
<dbReference type="EMBL" id="BK006944">
    <property type="protein sequence ID" value="DAA09111.1"/>
    <property type="molecule type" value="Genomic_DNA"/>
</dbReference>
<dbReference type="PIR" id="S37867">
    <property type="entry name" value="S37867"/>
</dbReference>
<dbReference type="RefSeq" id="NP_012878.1">
    <property type="nucleotide sequence ID" value="NM_001179612.1"/>
</dbReference>
<dbReference type="SMR" id="P36091"/>
<dbReference type="BioGRID" id="34087">
    <property type="interactions" value="96"/>
</dbReference>
<dbReference type="FunCoup" id="P36091">
    <property type="interactions" value="21"/>
</dbReference>
<dbReference type="IntAct" id="P36091">
    <property type="interactions" value="2"/>
</dbReference>
<dbReference type="MINT" id="P36091"/>
<dbReference type="STRING" id="4932.YKL046C"/>
<dbReference type="CAZy" id="GH76">
    <property type="family name" value="Glycoside Hydrolase Family 76"/>
</dbReference>
<dbReference type="GlyCosmos" id="P36091">
    <property type="glycosylation" value="12 sites, No reported glycans"/>
</dbReference>
<dbReference type="GlyGen" id="P36091">
    <property type="glycosylation" value="12 sites"/>
</dbReference>
<dbReference type="PaxDb" id="4932-YKL046C"/>
<dbReference type="PeptideAtlas" id="P36091"/>
<dbReference type="EnsemblFungi" id="YKL046C_mRNA">
    <property type="protein sequence ID" value="YKL046C"/>
    <property type="gene ID" value="YKL046C"/>
</dbReference>
<dbReference type="GeneID" id="853820"/>
<dbReference type="KEGG" id="sce:YKL046C"/>
<dbReference type="AGR" id="SGD:S000001529"/>
<dbReference type="SGD" id="S000001529">
    <property type="gene designation" value="DCW1"/>
</dbReference>
<dbReference type="VEuPathDB" id="FungiDB:YKL046C"/>
<dbReference type="eggNOG" id="ENOG502QSWP">
    <property type="taxonomic scope" value="Eukaryota"/>
</dbReference>
<dbReference type="HOGENOM" id="CLU_025694_1_2_1"/>
<dbReference type="InParanoid" id="P36091"/>
<dbReference type="OMA" id="QQSFKGY"/>
<dbReference type="OrthoDB" id="4187847at2759"/>
<dbReference type="BioCyc" id="YEAST:G3O-31847-MONOMER"/>
<dbReference type="BioGRID-ORCS" id="853820">
    <property type="hits" value="1 hit in 10 CRISPR screens"/>
</dbReference>
<dbReference type="PRO" id="PR:P36091"/>
<dbReference type="Proteomes" id="UP000002311">
    <property type="component" value="Chromosome XI"/>
</dbReference>
<dbReference type="RNAct" id="P36091">
    <property type="molecule type" value="protein"/>
</dbReference>
<dbReference type="GO" id="GO:0005933">
    <property type="term" value="C:cellular bud"/>
    <property type="evidence" value="ECO:0007005"/>
    <property type="project" value="SGD"/>
</dbReference>
<dbReference type="GO" id="GO:0005783">
    <property type="term" value="C:endoplasmic reticulum"/>
    <property type="evidence" value="ECO:0007005"/>
    <property type="project" value="SGD"/>
</dbReference>
<dbReference type="GO" id="GO:0005886">
    <property type="term" value="C:plasma membrane"/>
    <property type="evidence" value="ECO:0000314"/>
    <property type="project" value="SGD"/>
</dbReference>
<dbReference type="GO" id="GO:0098552">
    <property type="term" value="C:side of membrane"/>
    <property type="evidence" value="ECO:0007669"/>
    <property type="project" value="UniProtKB-KW"/>
</dbReference>
<dbReference type="GO" id="GO:0008496">
    <property type="term" value="F:mannan endo-1,6-alpha-mannosidase activity"/>
    <property type="evidence" value="ECO:0007669"/>
    <property type="project" value="UniProtKB-EC"/>
</dbReference>
<dbReference type="GO" id="GO:0007117">
    <property type="term" value="P:budding cell bud growth"/>
    <property type="evidence" value="ECO:0000316"/>
    <property type="project" value="SGD"/>
</dbReference>
<dbReference type="GO" id="GO:0016052">
    <property type="term" value="P:carbohydrate catabolic process"/>
    <property type="evidence" value="ECO:0007669"/>
    <property type="project" value="InterPro"/>
</dbReference>
<dbReference type="GO" id="GO:0071555">
    <property type="term" value="P:cell wall organization"/>
    <property type="evidence" value="ECO:0007669"/>
    <property type="project" value="UniProtKB-KW"/>
</dbReference>
<dbReference type="GO" id="GO:0009272">
    <property type="term" value="P:fungal-type cell wall biogenesis"/>
    <property type="evidence" value="ECO:0000314"/>
    <property type="project" value="SGD"/>
</dbReference>
<dbReference type="FunFam" id="1.50.10.20:FF:000006">
    <property type="entry name" value="Mannan endo-1,6-alpha-mannosidase"/>
    <property type="match status" value="1"/>
</dbReference>
<dbReference type="Gene3D" id="1.50.10.20">
    <property type="match status" value="1"/>
</dbReference>
<dbReference type="InterPro" id="IPR008928">
    <property type="entry name" value="6-hairpin_glycosidase_sf"/>
</dbReference>
<dbReference type="InterPro" id="IPR005198">
    <property type="entry name" value="Glyco_hydro_76"/>
</dbReference>
<dbReference type="InterPro" id="IPR014480">
    <property type="entry name" value="Mannan-1_6-alpha_mannosidase"/>
</dbReference>
<dbReference type="PANTHER" id="PTHR12145">
    <property type="entry name" value="MANNAN ENDO-1,6-ALPHA-MANNOSIDASE DCW1"/>
    <property type="match status" value="1"/>
</dbReference>
<dbReference type="PANTHER" id="PTHR12145:SF36">
    <property type="entry name" value="MANNAN ENDO-1,6-ALPHA-MANNOSIDASE DCW1"/>
    <property type="match status" value="1"/>
</dbReference>
<dbReference type="Pfam" id="PF03663">
    <property type="entry name" value="Glyco_hydro_76"/>
    <property type="match status" value="1"/>
</dbReference>
<dbReference type="PIRSF" id="PIRSF016302">
    <property type="entry name" value="Man_a_manosd"/>
    <property type="match status" value="1"/>
</dbReference>
<dbReference type="SUPFAM" id="SSF48208">
    <property type="entry name" value="Six-hairpin glycosidases"/>
    <property type="match status" value="1"/>
</dbReference>
<accession>P36091</accession>
<accession>D6VXP1</accession>
<accession>Q66R60</accession>
<reference key="1">
    <citation type="journal article" date="1993" name="Yeast">
        <title>The sequence of a 17.5 kb DNA fragment on the left arm of yeast chromosome XI identifies the protein kinase gene ELM1, the DNA primase gene PRI2, a new gene encoding a putative histone and seven new open reading frames.</title>
        <authorList>
            <person name="Purnelle B."/>
            <person name="Tettelin H."/>
            <person name="van Dyck L."/>
            <person name="Skala J."/>
            <person name="Goffeau A."/>
        </authorList>
    </citation>
    <scope>NUCLEOTIDE SEQUENCE [GENOMIC DNA]</scope>
    <source>
        <strain>ATCC 204508 / S288c</strain>
    </source>
</reference>
<reference key="2">
    <citation type="journal article" date="1994" name="Nature">
        <title>Complete DNA sequence of yeast chromosome XI.</title>
        <authorList>
            <person name="Dujon B."/>
            <person name="Alexandraki D."/>
            <person name="Andre B."/>
            <person name="Ansorge W."/>
            <person name="Baladron V."/>
            <person name="Ballesta J.P.G."/>
            <person name="Banrevi A."/>
            <person name="Bolle P.-A."/>
            <person name="Bolotin-Fukuhara M."/>
            <person name="Bossier P."/>
            <person name="Bou G."/>
            <person name="Boyer J."/>
            <person name="Buitrago M.J."/>
            <person name="Cheret G."/>
            <person name="Colleaux L."/>
            <person name="Daignan-Fornier B."/>
            <person name="del Rey F."/>
            <person name="Dion C."/>
            <person name="Domdey H."/>
            <person name="Duesterhoeft A."/>
            <person name="Duesterhus S."/>
            <person name="Entian K.-D."/>
            <person name="Erfle H."/>
            <person name="Esteban P.F."/>
            <person name="Feldmann H."/>
            <person name="Fernandes L."/>
            <person name="Fobo G.M."/>
            <person name="Fritz C."/>
            <person name="Fukuhara H."/>
            <person name="Gabel C."/>
            <person name="Gaillon L."/>
            <person name="Garcia-Cantalejo J.M."/>
            <person name="Garcia-Ramirez J.J."/>
            <person name="Gent M.E."/>
            <person name="Ghazvini M."/>
            <person name="Goffeau A."/>
            <person name="Gonzalez A."/>
            <person name="Grothues D."/>
            <person name="Guerreiro P."/>
            <person name="Hegemann J.H."/>
            <person name="Hewitt N."/>
            <person name="Hilger F."/>
            <person name="Hollenberg C.P."/>
            <person name="Horaitis O."/>
            <person name="Indge K.J."/>
            <person name="Jacquier A."/>
            <person name="James C.M."/>
            <person name="Jauniaux J.-C."/>
            <person name="Jimenez A."/>
            <person name="Keuchel H."/>
            <person name="Kirchrath L."/>
            <person name="Kleine K."/>
            <person name="Koetter P."/>
            <person name="Legrain P."/>
            <person name="Liebl S."/>
            <person name="Louis E.J."/>
            <person name="Maia e Silva A."/>
            <person name="Marck C."/>
            <person name="Monnier A.-L."/>
            <person name="Moestl D."/>
            <person name="Mueller S."/>
            <person name="Obermaier B."/>
            <person name="Oliver S.G."/>
            <person name="Pallier C."/>
            <person name="Pascolo S."/>
            <person name="Pfeiffer F."/>
            <person name="Philippsen P."/>
            <person name="Planta R.J."/>
            <person name="Pohl F.M."/>
            <person name="Pohl T.M."/>
            <person name="Poehlmann R."/>
            <person name="Portetelle D."/>
            <person name="Purnelle B."/>
            <person name="Puzos V."/>
            <person name="Ramezani Rad M."/>
            <person name="Rasmussen S.W."/>
            <person name="Remacha M.A."/>
            <person name="Revuelta J.L."/>
            <person name="Richard G.-F."/>
            <person name="Rieger M."/>
            <person name="Rodrigues-Pousada C."/>
            <person name="Rose M."/>
            <person name="Rupp T."/>
            <person name="Santos M.A."/>
            <person name="Schwager C."/>
            <person name="Sensen C."/>
            <person name="Skala J."/>
            <person name="Soares H."/>
            <person name="Sor F."/>
            <person name="Stegemann J."/>
            <person name="Tettelin H."/>
            <person name="Thierry A."/>
            <person name="Tzermia M."/>
            <person name="Urrestarazu L.A."/>
            <person name="van Dyck L."/>
            <person name="van Vliet-Reedijk J.C."/>
            <person name="Valens M."/>
            <person name="Vandenbol M."/>
            <person name="Vilela C."/>
            <person name="Vissers S."/>
            <person name="von Wettstein D."/>
            <person name="Voss H."/>
            <person name="Wiemann S."/>
            <person name="Xu G."/>
            <person name="Zimmermann J."/>
            <person name="Haasemann M."/>
            <person name="Becker I."/>
            <person name="Mewes H.-W."/>
        </authorList>
    </citation>
    <scope>NUCLEOTIDE SEQUENCE [LARGE SCALE GENOMIC DNA]</scope>
    <source>
        <strain>ATCC 204508 / S288c</strain>
    </source>
</reference>
<reference key="3">
    <citation type="journal article" date="2014" name="G3 (Bethesda)">
        <title>The reference genome sequence of Saccharomyces cerevisiae: Then and now.</title>
        <authorList>
            <person name="Engel S.R."/>
            <person name="Dietrich F.S."/>
            <person name="Fisk D.G."/>
            <person name="Binkley G."/>
            <person name="Balakrishnan R."/>
            <person name="Costanzo M.C."/>
            <person name="Dwight S.S."/>
            <person name="Hitz B.C."/>
            <person name="Karra K."/>
            <person name="Nash R.S."/>
            <person name="Weng S."/>
            <person name="Wong E.D."/>
            <person name="Lloyd P."/>
            <person name="Skrzypek M.S."/>
            <person name="Miyasato S.R."/>
            <person name="Simison M."/>
            <person name="Cherry J.M."/>
        </authorList>
    </citation>
    <scope>GENOME REANNOTATION</scope>
    <source>
        <strain>ATCC 204508 / S288c</strain>
    </source>
</reference>
<reference key="4">
    <citation type="journal article" date="2007" name="Genome Res.">
        <title>Approaching a complete repository of sequence-verified protein-encoding clones for Saccharomyces cerevisiae.</title>
        <authorList>
            <person name="Hu Y."/>
            <person name="Rolfs A."/>
            <person name="Bhullar B."/>
            <person name="Murthy T.V.S."/>
            <person name="Zhu C."/>
            <person name="Berger M.F."/>
            <person name="Camargo A.A."/>
            <person name="Kelley F."/>
            <person name="McCarron S."/>
            <person name="Jepson D."/>
            <person name="Richardson A."/>
            <person name="Raphael J."/>
            <person name="Moreira D."/>
            <person name="Taycher E."/>
            <person name="Zuo D."/>
            <person name="Mohr S."/>
            <person name="Kane M.F."/>
            <person name="Williamson J."/>
            <person name="Simpson A.J.G."/>
            <person name="Bulyk M.L."/>
            <person name="Harlow E."/>
            <person name="Marsischky G."/>
            <person name="Kolodner R.D."/>
            <person name="LaBaer J."/>
        </authorList>
    </citation>
    <scope>NUCLEOTIDE SEQUENCE [GENOMIC DNA]</scope>
    <source>
        <strain>ATCC 204508 / S288c</strain>
    </source>
</reference>
<reference key="5">
    <citation type="journal article" date="2002" name="Mol. Microbiol.">
        <title>Two homologous genes, DCW1 (YKL046c) and DFG5, are essential for cell growth and encode glycosylphosphatidylinositol (GPI)-anchored membrane proteins required for cell wall biogenesis in Saccharomyces cerevisiae.</title>
        <authorList>
            <person name="Kitagaki H."/>
            <person name="Wu H."/>
            <person name="Shimoi H."/>
            <person name="Ito K."/>
        </authorList>
    </citation>
    <scope>FUNCTION</scope>
    <scope>GLYCOSYLATION</scope>
    <scope>SUBCELLULAR LOCATION</scope>
</reference>
<reference key="6">
    <citation type="journal article" date="2003" name="Nature">
        <title>Global analysis of protein expression in yeast.</title>
        <authorList>
            <person name="Ghaemmaghami S."/>
            <person name="Huh W.-K."/>
            <person name="Bower K."/>
            <person name="Howson R.W."/>
            <person name="Belle A."/>
            <person name="Dephoure N."/>
            <person name="O'Shea E.K."/>
            <person name="Weissman J.S."/>
        </authorList>
    </citation>
    <scope>LEVEL OF PROTEIN EXPRESSION [LARGE SCALE ANALYSIS]</scope>
</reference>
<proteinExistence type="evidence at protein level"/>
<keyword id="KW-1003">Cell membrane</keyword>
<keyword id="KW-0961">Cell wall biogenesis/degradation</keyword>
<keyword id="KW-0325">Glycoprotein</keyword>
<keyword id="KW-0326">Glycosidase</keyword>
<keyword id="KW-0336">GPI-anchor</keyword>
<keyword id="KW-0378">Hydrolase</keyword>
<keyword id="KW-0449">Lipoprotein</keyword>
<keyword id="KW-0472">Membrane</keyword>
<keyword id="KW-1185">Reference proteome</keyword>
<keyword id="KW-0732">Signal</keyword>
<comment type="function">
    <text evidence="2">Required for normal synthesis of the cell wall.</text>
</comment>
<comment type="catalytic activity">
    <reaction>
        <text>Random hydrolysis of (1-&gt;6)-alpha-D-mannosidic linkages in unbranched (1-&gt;6)-mannans.</text>
        <dbReference type="EC" id="3.2.1.101"/>
    </reaction>
</comment>
<comment type="subcellular location">
    <subcellularLocation>
        <location evidence="2">Cell membrane</location>
        <topology evidence="2">Lipid-anchor</topology>
        <topology evidence="2">GPI-anchor</topology>
    </subcellularLocation>
    <text>GPI-anchored plasma membrane protein (GPI-PMP).</text>
</comment>
<comment type="miscellaneous">
    <text evidence="3">Present with 2580 molecules/cell in log phase SD medium.</text>
</comment>
<comment type="similarity">
    <text evidence="4">Belongs to the glycosyl hydrolase 76 family.</text>
</comment>
<protein>
    <recommendedName>
        <fullName>Mannan endo-1,6-alpha-mannosidase DCW1</fullName>
        <ecNumber>3.2.1.101</ecNumber>
    </recommendedName>
    <alternativeName>
        <fullName>Defective cell wall 1</fullName>
    </alternativeName>
    <alternativeName>
        <fullName>Endo-alpha-1-&gt;6-D-mannanase DCW1</fullName>
    </alternativeName>
</protein>
<evidence type="ECO:0000255" key="1"/>
<evidence type="ECO:0000269" key="2">
    <source>
    </source>
</evidence>
<evidence type="ECO:0000269" key="3">
    <source>
    </source>
</evidence>
<evidence type="ECO:0000305" key="4"/>
<organism>
    <name type="scientific">Saccharomyces cerevisiae (strain ATCC 204508 / S288c)</name>
    <name type="common">Baker's yeast</name>
    <dbReference type="NCBI Taxonomy" id="559292"/>
    <lineage>
        <taxon>Eukaryota</taxon>
        <taxon>Fungi</taxon>
        <taxon>Dikarya</taxon>
        <taxon>Ascomycota</taxon>
        <taxon>Saccharomycotina</taxon>
        <taxon>Saccharomycetes</taxon>
        <taxon>Saccharomycetales</taxon>
        <taxon>Saccharomycetaceae</taxon>
        <taxon>Saccharomyces</taxon>
    </lineage>
</organism>